<dbReference type="EC" id="5.4.2.10" evidence="1"/>
<dbReference type="EMBL" id="AM180355">
    <property type="protein sequence ID" value="CAJ66939.2"/>
    <property type="molecule type" value="Genomic_DNA"/>
</dbReference>
<dbReference type="RefSeq" id="WP_011860638.1">
    <property type="nucleotide sequence ID" value="NZ_JAUPES010000004.1"/>
</dbReference>
<dbReference type="RefSeq" id="YP_001086588.2">
    <property type="nucleotide sequence ID" value="NC_009089.1"/>
</dbReference>
<dbReference type="SMR" id="Q18CL0"/>
<dbReference type="STRING" id="272563.CD630_01190"/>
<dbReference type="EnsemblBacteria" id="CAJ66939">
    <property type="protein sequence ID" value="CAJ66939"/>
    <property type="gene ID" value="CD630_01190"/>
</dbReference>
<dbReference type="GeneID" id="66352666"/>
<dbReference type="KEGG" id="cdf:CD630_01190"/>
<dbReference type="KEGG" id="pdc:CDIF630_00234"/>
<dbReference type="PATRIC" id="fig|272563.120.peg.131"/>
<dbReference type="eggNOG" id="COG1109">
    <property type="taxonomic scope" value="Bacteria"/>
</dbReference>
<dbReference type="OrthoDB" id="9806956at2"/>
<dbReference type="PhylomeDB" id="Q18CL0"/>
<dbReference type="BioCyc" id="PDIF272563:G12WB-223-MONOMER"/>
<dbReference type="Proteomes" id="UP000001978">
    <property type="component" value="Chromosome"/>
</dbReference>
<dbReference type="GO" id="GO:0005829">
    <property type="term" value="C:cytosol"/>
    <property type="evidence" value="ECO:0007669"/>
    <property type="project" value="TreeGrafter"/>
</dbReference>
<dbReference type="GO" id="GO:0000287">
    <property type="term" value="F:magnesium ion binding"/>
    <property type="evidence" value="ECO:0007669"/>
    <property type="project" value="UniProtKB-UniRule"/>
</dbReference>
<dbReference type="GO" id="GO:0008966">
    <property type="term" value="F:phosphoglucosamine mutase activity"/>
    <property type="evidence" value="ECO:0007669"/>
    <property type="project" value="UniProtKB-UniRule"/>
</dbReference>
<dbReference type="GO" id="GO:0004615">
    <property type="term" value="F:phosphomannomutase activity"/>
    <property type="evidence" value="ECO:0007669"/>
    <property type="project" value="TreeGrafter"/>
</dbReference>
<dbReference type="GO" id="GO:0005975">
    <property type="term" value="P:carbohydrate metabolic process"/>
    <property type="evidence" value="ECO:0007669"/>
    <property type="project" value="InterPro"/>
</dbReference>
<dbReference type="GO" id="GO:0009252">
    <property type="term" value="P:peptidoglycan biosynthetic process"/>
    <property type="evidence" value="ECO:0007669"/>
    <property type="project" value="TreeGrafter"/>
</dbReference>
<dbReference type="GO" id="GO:0006048">
    <property type="term" value="P:UDP-N-acetylglucosamine biosynthetic process"/>
    <property type="evidence" value="ECO:0007669"/>
    <property type="project" value="TreeGrafter"/>
</dbReference>
<dbReference type="CDD" id="cd05802">
    <property type="entry name" value="GlmM"/>
    <property type="match status" value="1"/>
</dbReference>
<dbReference type="FunFam" id="3.30.310.50:FF:000001">
    <property type="entry name" value="Phosphoglucosamine mutase"/>
    <property type="match status" value="1"/>
</dbReference>
<dbReference type="FunFam" id="3.40.120.10:FF:000001">
    <property type="entry name" value="Phosphoglucosamine mutase"/>
    <property type="match status" value="1"/>
</dbReference>
<dbReference type="FunFam" id="3.40.120.10:FF:000003">
    <property type="entry name" value="Phosphoglucosamine mutase"/>
    <property type="match status" value="1"/>
</dbReference>
<dbReference type="Gene3D" id="3.40.120.10">
    <property type="entry name" value="Alpha-D-Glucose-1,6-Bisphosphate, subunit A, domain 3"/>
    <property type="match status" value="3"/>
</dbReference>
<dbReference type="Gene3D" id="3.30.310.50">
    <property type="entry name" value="Alpha-D-phosphohexomutase, C-terminal domain"/>
    <property type="match status" value="1"/>
</dbReference>
<dbReference type="HAMAP" id="MF_01554_B">
    <property type="entry name" value="GlmM_B"/>
    <property type="match status" value="1"/>
</dbReference>
<dbReference type="InterPro" id="IPR005844">
    <property type="entry name" value="A-D-PHexomutase_a/b/a-I"/>
</dbReference>
<dbReference type="InterPro" id="IPR016055">
    <property type="entry name" value="A-D-PHexomutase_a/b/a-I/II/III"/>
</dbReference>
<dbReference type="InterPro" id="IPR005845">
    <property type="entry name" value="A-D-PHexomutase_a/b/a-II"/>
</dbReference>
<dbReference type="InterPro" id="IPR005846">
    <property type="entry name" value="A-D-PHexomutase_a/b/a-III"/>
</dbReference>
<dbReference type="InterPro" id="IPR005843">
    <property type="entry name" value="A-D-PHexomutase_C"/>
</dbReference>
<dbReference type="InterPro" id="IPR036900">
    <property type="entry name" value="A-D-PHexomutase_C_sf"/>
</dbReference>
<dbReference type="InterPro" id="IPR016066">
    <property type="entry name" value="A-D-PHexomutase_CS"/>
</dbReference>
<dbReference type="InterPro" id="IPR005841">
    <property type="entry name" value="Alpha-D-phosphohexomutase_SF"/>
</dbReference>
<dbReference type="InterPro" id="IPR006352">
    <property type="entry name" value="GlmM_bact"/>
</dbReference>
<dbReference type="InterPro" id="IPR050060">
    <property type="entry name" value="Phosphoglucosamine_mutase"/>
</dbReference>
<dbReference type="NCBIfam" id="TIGR01455">
    <property type="entry name" value="glmM"/>
    <property type="match status" value="1"/>
</dbReference>
<dbReference type="NCBIfam" id="NF008139">
    <property type="entry name" value="PRK10887.1"/>
    <property type="match status" value="1"/>
</dbReference>
<dbReference type="PANTHER" id="PTHR42946:SF1">
    <property type="entry name" value="PHOSPHOGLUCOMUTASE (ALPHA-D-GLUCOSE-1,6-BISPHOSPHATE-DEPENDENT)"/>
    <property type="match status" value="1"/>
</dbReference>
<dbReference type="PANTHER" id="PTHR42946">
    <property type="entry name" value="PHOSPHOHEXOSE MUTASE"/>
    <property type="match status" value="1"/>
</dbReference>
<dbReference type="Pfam" id="PF02878">
    <property type="entry name" value="PGM_PMM_I"/>
    <property type="match status" value="1"/>
</dbReference>
<dbReference type="Pfam" id="PF02879">
    <property type="entry name" value="PGM_PMM_II"/>
    <property type="match status" value="1"/>
</dbReference>
<dbReference type="Pfam" id="PF02880">
    <property type="entry name" value="PGM_PMM_III"/>
    <property type="match status" value="1"/>
</dbReference>
<dbReference type="Pfam" id="PF00408">
    <property type="entry name" value="PGM_PMM_IV"/>
    <property type="match status" value="1"/>
</dbReference>
<dbReference type="PRINTS" id="PR00509">
    <property type="entry name" value="PGMPMM"/>
</dbReference>
<dbReference type="SUPFAM" id="SSF55957">
    <property type="entry name" value="Phosphoglucomutase, C-terminal domain"/>
    <property type="match status" value="1"/>
</dbReference>
<dbReference type="SUPFAM" id="SSF53738">
    <property type="entry name" value="Phosphoglucomutase, first 3 domains"/>
    <property type="match status" value="3"/>
</dbReference>
<dbReference type="PROSITE" id="PS00710">
    <property type="entry name" value="PGM_PMM"/>
    <property type="match status" value="1"/>
</dbReference>
<organism>
    <name type="scientific">Clostridioides difficile (strain 630)</name>
    <name type="common">Peptoclostridium difficile</name>
    <dbReference type="NCBI Taxonomy" id="272563"/>
    <lineage>
        <taxon>Bacteria</taxon>
        <taxon>Bacillati</taxon>
        <taxon>Bacillota</taxon>
        <taxon>Clostridia</taxon>
        <taxon>Peptostreptococcales</taxon>
        <taxon>Peptostreptococcaceae</taxon>
        <taxon>Clostridioides</taxon>
    </lineage>
</organism>
<name>GLMM_CLOD6</name>
<keyword id="KW-0413">Isomerase</keyword>
<keyword id="KW-0460">Magnesium</keyword>
<keyword id="KW-0479">Metal-binding</keyword>
<keyword id="KW-0597">Phosphoprotein</keyword>
<keyword id="KW-1185">Reference proteome</keyword>
<protein>
    <recommendedName>
        <fullName evidence="1">Phosphoglucosamine mutase</fullName>
        <ecNumber evidence="1">5.4.2.10</ecNumber>
    </recommendedName>
</protein>
<accession>Q18CL0</accession>
<proteinExistence type="inferred from homology"/>
<gene>
    <name evidence="1" type="primary">glmM</name>
    <name type="ordered locus">CD630_01190</name>
</gene>
<reference key="1">
    <citation type="journal article" date="2006" name="Nat. Genet.">
        <title>The multidrug-resistant human pathogen Clostridium difficile has a highly mobile, mosaic genome.</title>
        <authorList>
            <person name="Sebaihia M."/>
            <person name="Wren B.W."/>
            <person name="Mullany P."/>
            <person name="Fairweather N.F."/>
            <person name="Minton N."/>
            <person name="Stabler R."/>
            <person name="Thomson N.R."/>
            <person name="Roberts A.P."/>
            <person name="Cerdeno-Tarraga A.M."/>
            <person name="Wang H."/>
            <person name="Holden M.T.G."/>
            <person name="Wright A."/>
            <person name="Churcher C."/>
            <person name="Quail M.A."/>
            <person name="Baker S."/>
            <person name="Bason N."/>
            <person name="Brooks K."/>
            <person name="Chillingworth T."/>
            <person name="Cronin A."/>
            <person name="Davis P."/>
            <person name="Dowd L."/>
            <person name="Fraser A."/>
            <person name="Feltwell T."/>
            <person name="Hance Z."/>
            <person name="Holroyd S."/>
            <person name="Jagels K."/>
            <person name="Moule S."/>
            <person name="Mungall K."/>
            <person name="Price C."/>
            <person name="Rabbinowitsch E."/>
            <person name="Sharp S."/>
            <person name="Simmonds M."/>
            <person name="Stevens K."/>
            <person name="Unwin L."/>
            <person name="Whithead S."/>
            <person name="Dupuy B."/>
            <person name="Dougan G."/>
            <person name="Barrell B."/>
            <person name="Parkhill J."/>
        </authorList>
    </citation>
    <scope>NUCLEOTIDE SEQUENCE [LARGE SCALE GENOMIC DNA]</scope>
    <source>
        <strain>630</strain>
    </source>
</reference>
<comment type="function">
    <text evidence="1">Catalyzes the conversion of glucosamine-6-phosphate to glucosamine-1-phosphate.</text>
</comment>
<comment type="catalytic activity">
    <reaction evidence="1">
        <text>alpha-D-glucosamine 1-phosphate = D-glucosamine 6-phosphate</text>
        <dbReference type="Rhea" id="RHEA:23424"/>
        <dbReference type="ChEBI" id="CHEBI:58516"/>
        <dbReference type="ChEBI" id="CHEBI:58725"/>
        <dbReference type="EC" id="5.4.2.10"/>
    </reaction>
</comment>
<comment type="cofactor">
    <cofactor evidence="1">
        <name>Mg(2+)</name>
        <dbReference type="ChEBI" id="CHEBI:18420"/>
    </cofactor>
    <text evidence="1">Binds 1 Mg(2+) ion per subunit.</text>
</comment>
<comment type="PTM">
    <text evidence="1">Activated by phosphorylation.</text>
</comment>
<comment type="similarity">
    <text evidence="1">Belongs to the phosphohexose mutase family.</text>
</comment>
<feature type="chain" id="PRO_0000305636" description="Phosphoglucosamine mutase">
    <location>
        <begin position="1"/>
        <end position="448"/>
    </location>
</feature>
<feature type="active site" description="Phosphoserine intermediate" evidence="1">
    <location>
        <position position="100"/>
    </location>
</feature>
<feature type="binding site" description="via phosphate group" evidence="1">
    <location>
        <position position="100"/>
    </location>
    <ligand>
        <name>Mg(2+)</name>
        <dbReference type="ChEBI" id="CHEBI:18420"/>
    </ligand>
</feature>
<feature type="binding site" evidence="1">
    <location>
        <position position="240"/>
    </location>
    <ligand>
        <name>Mg(2+)</name>
        <dbReference type="ChEBI" id="CHEBI:18420"/>
    </ligand>
</feature>
<feature type="binding site" evidence="1">
    <location>
        <position position="242"/>
    </location>
    <ligand>
        <name>Mg(2+)</name>
        <dbReference type="ChEBI" id="CHEBI:18420"/>
    </ligand>
</feature>
<feature type="binding site" evidence="1">
    <location>
        <position position="244"/>
    </location>
    <ligand>
        <name>Mg(2+)</name>
        <dbReference type="ChEBI" id="CHEBI:18420"/>
    </ligand>
</feature>
<feature type="modified residue" description="Phosphoserine" evidence="1">
    <location>
        <position position="100"/>
    </location>
</feature>
<evidence type="ECO:0000255" key="1">
    <source>
        <dbReference type="HAMAP-Rule" id="MF_01554"/>
    </source>
</evidence>
<sequence>MRKYFGTDGVRGVANTELTCDLAYKLGRAGGFVLAQGDHRVKVVVGKDTRISGDMLEASLIAGLMSVGCDVITVGIIPTPAVAYLTRKYGADCGVVISASHNPVEYNGIKFFNKNGYKLDDEIELKIEEYIDDIDKIDCLPIGENVGRKLHEHCAQRDYVDYLKSIISTDFKGLKVVLDCANGASYKVAPIVFDELGASVISINSSPDGNNINYKCGSTHPEQLQRAVLEHNADLGLAYDGDADRLIAVNEKGQIVDGDHIMILSALNLKKNNKLAQDTLVVTVMSNIGLTIAAKENGINLSTTAVGDRYVLEDMVKNGYNLGGEQSGHMIFLDYNTTGDGVLSSLILANIILQEKKPLSEIASIMSQYPQVLVNATIKNENKNKYMEYPEIKTEIERIESILDGNGRVLIRPSGTEPLVRVMLEGKEEGQIKELATNLANLIQEKLS</sequence>